<keyword id="KW-0004">4Fe-4S</keyword>
<keyword id="KW-0408">Iron</keyword>
<keyword id="KW-0411">Iron-sulfur</keyword>
<keyword id="KW-0479">Metal-binding</keyword>
<keyword id="KW-0489">Methyltransferase</keyword>
<keyword id="KW-1185">Reference proteome</keyword>
<keyword id="KW-0949">S-adenosyl-L-methionine</keyword>
<keyword id="KW-0808">Transferase</keyword>
<feature type="chain" id="PRO_0000162043" description="Uncharacterized RNA methyltransferase tlr0942">
    <location>
        <begin position="1"/>
        <end position="449"/>
    </location>
</feature>
<feature type="domain" description="TRAM" evidence="2">
    <location>
        <begin position="3"/>
        <end position="61"/>
    </location>
</feature>
<feature type="active site" description="Nucleophile" evidence="3">
    <location>
        <position position="405"/>
    </location>
</feature>
<feature type="binding site" evidence="1">
    <location>
        <position position="74"/>
    </location>
    <ligand>
        <name>[4Fe-4S] cluster</name>
        <dbReference type="ChEBI" id="CHEBI:49883"/>
    </ligand>
</feature>
<feature type="binding site" evidence="1">
    <location>
        <position position="80"/>
    </location>
    <ligand>
        <name>[4Fe-4S] cluster</name>
        <dbReference type="ChEBI" id="CHEBI:49883"/>
    </ligand>
</feature>
<feature type="binding site" evidence="1">
    <location>
        <position position="83"/>
    </location>
    <ligand>
        <name>[4Fe-4S] cluster</name>
        <dbReference type="ChEBI" id="CHEBI:49883"/>
    </ligand>
</feature>
<feature type="binding site" evidence="1">
    <location>
        <position position="161"/>
    </location>
    <ligand>
        <name>[4Fe-4S] cluster</name>
        <dbReference type="ChEBI" id="CHEBI:49883"/>
    </ligand>
</feature>
<feature type="binding site" evidence="3">
    <location>
        <position position="283"/>
    </location>
    <ligand>
        <name>S-adenosyl-L-methionine</name>
        <dbReference type="ChEBI" id="CHEBI:59789"/>
    </ligand>
</feature>
<feature type="binding site" evidence="3">
    <location>
        <position position="312"/>
    </location>
    <ligand>
        <name>S-adenosyl-L-methionine</name>
        <dbReference type="ChEBI" id="CHEBI:59789"/>
    </ligand>
</feature>
<feature type="binding site" evidence="3">
    <location>
        <position position="333"/>
    </location>
    <ligand>
        <name>S-adenosyl-L-methionine</name>
        <dbReference type="ChEBI" id="CHEBI:59789"/>
    </ligand>
</feature>
<feature type="binding site" evidence="3">
    <location>
        <position position="378"/>
    </location>
    <ligand>
        <name>S-adenosyl-L-methionine</name>
        <dbReference type="ChEBI" id="CHEBI:59789"/>
    </ligand>
</feature>
<name>Y942_THEVB</name>
<accession>Q8DKB7</accession>
<organism>
    <name type="scientific">Thermosynechococcus vestitus (strain NIES-2133 / IAM M-273 / BP-1)</name>
    <dbReference type="NCBI Taxonomy" id="197221"/>
    <lineage>
        <taxon>Bacteria</taxon>
        <taxon>Bacillati</taxon>
        <taxon>Cyanobacteriota</taxon>
        <taxon>Cyanophyceae</taxon>
        <taxon>Acaryochloridales</taxon>
        <taxon>Thermosynechococcaceae</taxon>
        <taxon>Thermosynechococcus</taxon>
    </lineage>
</organism>
<dbReference type="EC" id="2.1.1.-"/>
<dbReference type="EMBL" id="BA000039">
    <property type="protein sequence ID" value="BAC08494.1"/>
    <property type="molecule type" value="Genomic_DNA"/>
</dbReference>
<dbReference type="RefSeq" id="NP_681732.1">
    <property type="nucleotide sequence ID" value="NC_004113.1"/>
</dbReference>
<dbReference type="RefSeq" id="WP_011056786.1">
    <property type="nucleotide sequence ID" value="NC_004113.1"/>
</dbReference>
<dbReference type="SMR" id="Q8DKB7"/>
<dbReference type="STRING" id="197221.gene:10747534"/>
<dbReference type="EnsemblBacteria" id="BAC08494">
    <property type="protein sequence ID" value="BAC08494"/>
    <property type="gene ID" value="BAC08494"/>
</dbReference>
<dbReference type="KEGG" id="tel:tlr0942"/>
<dbReference type="PATRIC" id="fig|197221.4.peg.989"/>
<dbReference type="eggNOG" id="COG2265">
    <property type="taxonomic scope" value="Bacteria"/>
</dbReference>
<dbReference type="Proteomes" id="UP000000440">
    <property type="component" value="Chromosome"/>
</dbReference>
<dbReference type="GO" id="GO:0051539">
    <property type="term" value="F:4 iron, 4 sulfur cluster binding"/>
    <property type="evidence" value="ECO:0007669"/>
    <property type="project" value="UniProtKB-KW"/>
</dbReference>
<dbReference type="GO" id="GO:0046872">
    <property type="term" value="F:metal ion binding"/>
    <property type="evidence" value="ECO:0007669"/>
    <property type="project" value="UniProtKB-KW"/>
</dbReference>
<dbReference type="GO" id="GO:0070041">
    <property type="term" value="F:rRNA (uridine-C5-)-methyltransferase activity"/>
    <property type="evidence" value="ECO:0007669"/>
    <property type="project" value="TreeGrafter"/>
</dbReference>
<dbReference type="GO" id="GO:0070475">
    <property type="term" value="P:rRNA base methylation"/>
    <property type="evidence" value="ECO:0007669"/>
    <property type="project" value="TreeGrafter"/>
</dbReference>
<dbReference type="CDD" id="cd02440">
    <property type="entry name" value="AdoMet_MTases"/>
    <property type="match status" value="1"/>
</dbReference>
<dbReference type="FunFam" id="3.40.50.150:FF:000009">
    <property type="entry name" value="23S rRNA (Uracil(1939)-C(5))-methyltransferase RlmD"/>
    <property type="match status" value="1"/>
</dbReference>
<dbReference type="FunFam" id="2.40.50.140:FF:000097">
    <property type="entry name" value="23S rRNA (uracil(1939)-C(5))-methyltransferase RlmD"/>
    <property type="match status" value="1"/>
</dbReference>
<dbReference type="Gene3D" id="2.40.50.1070">
    <property type="match status" value="1"/>
</dbReference>
<dbReference type="Gene3D" id="2.40.50.140">
    <property type="entry name" value="Nucleic acid-binding proteins"/>
    <property type="match status" value="1"/>
</dbReference>
<dbReference type="Gene3D" id="3.40.50.150">
    <property type="entry name" value="Vaccinia Virus protein VP39"/>
    <property type="match status" value="1"/>
</dbReference>
<dbReference type="InterPro" id="IPR030390">
    <property type="entry name" value="MeTrfase_TrmA_AS"/>
</dbReference>
<dbReference type="InterPro" id="IPR030391">
    <property type="entry name" value="MeTrfase_TrmA_CS"/>
</dbReference>
<dbReference type="InterPro" id="IPR012340">
    <property type="entry name" value="NA-bd_OB-fold"/>
</dbReference>
<dbReference type="InterPro" id="IPR029063">
    <property type="entry name" value="SAM-dependent_MTases_sf"/>
</dbReference>
<dbReference type="InterPro" id="IPR002792">
    <property type="entry name" value="TRAM_dom"/>
</dbReference>
<dbReference type="InterPro" id="IPR010280">
    <property type="entry name" value="U5_MeTrfase_fam"/>
</dbReference>
<dbReference type="NCBIfam" id="TIGR00479">
    <property type="entry name" value="rumA"/>
    <property type="match status" value="1"/>
</dbReference>
<dbReference type="PANTHER" id="PTHR11061">
    <property type="entry name" value="RNA M5U METHYLTRANSFERASE"/>
    <property type="match status" value="1"/>
</dbReference>
<dbReference type="PANTHER" id="PTHR11061:SF30">
    <property type="entry name" value="TRNA (URACIL(54)-C(5))-METHYLTRANSFERASE"/>
    <property type="match status" value="1"/>
</dbReference>
<dbReference type="Pfam" id="PF01938">
    <property type="entry name" value="TRAM"/>
    <property type="match status" value="1"/>
</dbReference>
<dbReference type="Pfam" id="PF05958">
    <property type="entry name" value="tRNA_U5-meth_tr"/>
    <property type="match status" value="1"/>
</dbReference>
<dbReference type="SUPFAM" id="SSF50249">
    <property type="entry name" value="Nucleic acid-binding proteins"/>
    <property type="match status" value="1"/>
</dbReference>
<dbReference type="SUPFAM" id="SSF53335">
    <property type="entry name" value="S-adenosyl-L-methionine-dependent methyltransferases"/>
    <property type="match status" value="1"/>
</dbReference>
<dbReference type="PROSITE" id="PS51687">
    <property type="entry name" value="SAM_MT_RNA_M5U"/>
    <property type="match status" value="1"/>
</dbReference>
<dbReference type="PROSITE" id="PS50926">
    <property type="entry name" value="TRAM"/>
    <property type="match status" value="1"/>
</dbReference>
<dbReference type="PROSITE" id="PS01230">
    <property type="entry name" value="TRMA_1"/>
    <property type="match status" value="1"/>
</dbReference>
<dbReference type="PROSITE" id="PS01231">
    <property type="entry name" value="TRMA_2"/>
    <property type="match status" value="1"/>
</dbReference>
<gene>
    <name type="ordered locus">tlr0942</name>
</gene>
<proteinExistence type="inferred from homology"/>
<evidence type="ECO:0000250" key="1"/>
<evidence type="ECO:0000255" key="2">
    <source>
        <dbReference type="PROSITE-ProRule" id="PRU00208"/>
    </source>
</evidence>
<evidence type="ECO:0000255" key="3">
    <source>
        <dbReference type="PROSITE-ProRule" id="PRU01024"/>
    </source>
</evidence>
<protein>
    <recommendedName>
        <fullName>Uncharacterized RNA methyltransferase tlr0942</fullName>
        <ecNumber>2.1.1.-</ecNumber>
    </recommendedName>
</protein>
<comment type="similarity">
    <text evidence="3">Belongs to the class I-like SAM-binding methyltransferase superfamily. RNA M5U methyltransferase family.</text>
</comment>
<reference key="1">
    <citation type="journal article" date="2002" name="DNA Res.">
        <title>Complete genome structure of the thermophilic cyanobacterium Thermosynechococcus elongatus BP-1.</title>
        <authorList>
            <person name="Nakamura Y."/>
            <person name="Kaneko T."/>
            <person name="Sato S."/>
            <person name="Ikeuchi M."/>
            <person name="Katoh H."/>
            <person name="Sasamoto S."/>
            <person name="Watanabe A."/>
            <person name="Iriguchi M."/>
            <person name="Kawashima K."/>
            <person name="Kimura T."/>
            <person name="Kishida Y."/>
            <person name="Kiyokawa C."/>
            <person name="Kohara M."/>
            <person name="Matsumoto M."/>
            <person name="Matsuno A."/>
            <person name="Nakazaki N."/>
            <person name="Shimpo S."/>
            <person name="Sugimoto M."/>
            <person name="Takeuchi C."/>
            <person name="Yamada M."/>
            <person name="Tabata S."/>
        </authorList>
    </citation>
    <scope>NUCLEOTIDE SEQUENCE [LARGE SCALE GENOMIC DNA]</scope>
    <source>
        <strain>NIES-2133 / IAM M-273 / BP-1</strain>
    </source>
</reference>
<sequence>MSVWQQGATIELRIDSLSHTGEGVGRWQDRVVFVADTVPGDRLRVRLTHVKRQYAHGKVLEVVQPSGQRVRPNCIVADKCGGCQWQRVAYATQLAAKEQLVKDAIARIGHLEPQAFLPILAAPNPFGYRNKVTYPLGRRHGAVVAGYYQKGSHHLVNLNQCPVQDPRLNPLLAALKQALQPWPIYREQTHEPGFRHLGLRIGQRTGEQLITLVLAGPLPAGLAAEAEGWLQRFQGVIGVCVNFNHHVGNRIFGDETQVLAGRPYLWEEMAGVRFQIASTTFFQVNTAQAEQLVTTLRDWIAPTGQERLVDLYCGVGTLSLPLAGAVAEVIGVEVHSASVQQAIANAQHNGINNAHFVCAKAEEWLPRYDQAVDVLILDPPRKGCDRAVLDAILHNCPPRLLYVSCHPATLARDLAHLCSTGTYQLAKIQPLDMFPQTAHVETIALLTTS</sequence>